<protein>
    <recommendedName>
        <fullName>Uncharacterized HTH-type transcriptional regulator Mb0023</fullName>
    </recommendedName>
</protein>
<proteinExistence type="predicted"/>
<gene>
    <name type="ordered locus">BQ2027_MB0023</name>
</gene>
<feature type="chain" id="PRO_0000149773" description="Uncharacterized HTH-type transcriptional regulator Mb0023">
    <location>
        <begin position="1"/>
        <end position="256"/>
    </location>
</feature>
<feature type="domain" description="HTH cro/C1-type" evidence="1">
    <location>
        <begin position="10"/>
        <end position="64"/>
    </location>
</feature>
<feature type="DNA-binding region" description="H-T-H motif" evidence="1">
    <location>
        <begin position="21"/>
        <end position="40"/>
    </location>
</feature>
<evidence type="ECO:0000255" key="1">
    <source>
        <dbReference type="PROSITE-ProRule" id="PRU00257"/>
    </source>
</evidence>
<reference key="1">
    <citation type="journal article" date="2003" name="Proc. Natl. Acad. Sci. U.S.A.">
        <title>The complete genome sequence of Mycobacterium bovis.</title>
        <authorList>
            <person name="Garnier T."/>
            <person name="Eiglmeier K."/>
            <person name="Camus J.-C."/>
            <person name="Medina N."/>
            <person name="Mansoor H."/>
            <person name="Pryor M."/>
            <person name="Duthoy S."/>
            <person name="Grondin S."/>
            <person name="Lacroix C."/>
            <person name="Monsempe C."/>
            <person name="Simon S."/>
            <person name="Harris B."/>
            <person name="Atkin R."/>
            <person name="Doggett J."/>
            <person name="Mayes R."/>
            <person name="Keating L."/>
            <person name="Wheeler P.R."/>
            <person name="Parkhill J."/>
            <person name="Barrell B.G."/>
            <person name="Cole S.T."/>
            <person name="Gordon S.V."/>
            <person name="Hewinson R.G."/>
        </authorList>
    </citation>
    <scope>NUCLEOTIDE SEQUENCE [LARGE SCALE GENOMIC DNA]</scope>
    <source>
        <strain>ATCC BAA-935 / AF2122/97</strain>
    </source>
</reference>
<reference key="2">
    <citation type="journal article" date="2017" name="Genome Announc.">
        <title>Updated reference genome sequence and annotation of Mycobacterium bovis AF2122/97.</title>
        <authorList>
            <person name="Malone K.M."/>
            <person name="Farrell D."/>
            <person name="Stuber T.P."/>
            <person name="Schubert O.T."/>
            <person name="Aebersold R."/>
            <person name="Robbe-Austerman S."/>
            <person name="Gordon S.V."/>
        </authorList>
    </citation>
    <scope>NUCLEOTIDE SEQUENCE [LARGE SCALE GENOMIC DNA]</scope>
    <scope>GENOME REANNOTATION</scope>
    <source>
        <strain>ATCC BAA-935 / AF2122/97</strain>
    </source>
</reference>
<accession>P67705</accession>
<accession>A0A1R3XU26</accession>
<accession>P71593</accession>
<accession>X2BDT3</accession>
<dbReference type="EMBL" id="LT708304">
    <property type="protein sequence ID" value="SIT98371.1"/>
    <property type="molecule type" value="Genomic_DNA"/>
</dbReference>
<dbReference type="RefSeq" id="NP_853693.1">
    <property type="nucleotide sequence ID" value="NC_002945.3"/>
</dbReference>
<dbReference type="RefSeq" id="WP_003400391.1">
    <property type="nucleotide sequence ID" value="NC_002945.4"/>
</dbReference>
<dbReference type="SMR" id="P67705"/>
<dbReference type="KEGG" id="mbo:BQ2027_MB0023"/>
<dbReference type="PATRIC" id="fig|233413.5.peg.28"/>
<dbReference type="Proteomes" id="UP000001419">
    <property type="component" value="Chromosome"/>
</dbReference>
<dbReference type="GO" id="GO:0003677">
    <property type="term" value="F:DNA binding"/>
    <property type="evidence" value="ECO:0007669"/>
    <property type="project" value="UniProtKB-KW"/>
</dbReference>
<dbReference type="CDD" id="cd00093">
    <property type="entry name" value="HTH_XRE"/>
    <property type="match status" value="1"/>
</dbReference>
<dbReference type="Gene3D" id="1.10.260.40">
    <property type="entry name" value="lambda repressor-like DNA-binding domains"/>
    <property type="match status" value="1"/>
</dbReference>
<dbReference type="InterPro" id="IPR001387">
    <property type="entry name" value="Cro/C1-type_HTH"/>
</dbReference>
<dbReference type="InterPro" id="IPR010982">
    <property type="entry name" value="Lambda_DNA-bd_dom_sf"/>
</dbReference>
<dbReference type="Pfam" id="PF01381">
    <property type="entry name" value="HTH_3"/>
    <property type="match status" value="1"/>
</dbReference>
<dbReference type="SMART" id="SM00530">
    <property type="entry name" value="HTH_XRE"/>
    <property type="match status" value="1"/>
</dbReference>
<dbReference type="SUPFAM" id="SSF47413">
    <property type="entry name" value="lambda repressor-like DNA-binding domains"/>
    <property type="match status" value="1"/>
</dbReference>
<dbReference type="PROSITE" id="PS50943">
    <property type="entry name" value="HTH_CROC1"/>
    <property type="match status" value="1"/>
</dbReference>
<keyword id="KW-0238">DNA-binding</keyword>
<keyword id="KW-1185">Reference proteome</keyword>
<keyword id="KW-0804">Transcription</keyword>
<keyword id="KW-0805">Transcription regulation</keyword>
<organism>
    <name type="scientific">Mycobacterium bovis (strain ATCC BAA-935 / AF2122/97)</name>
    <dbReference type="NCBI Taxonomy" id="233413"/>
    <lineage>
        <taxon>Bacteria</taxon>
        <taxon>Bacillati</taxon>
        <taxon>Actinomycetota</taxon>
        <taxon>Actinomycetes</taxon>
        <taxon>Mycobacteriales</taxon>
        <taxon>Mycobacteriaceae</taxon>
        <taxon>Mycobacterium</taxon>
        <taxon>Mycobacterium tuberculosis complex</taxon>
    </lineage>
</organism>
<sequence>MSRESAGAAIRALRESRDWSLADLAAATGVSTMGLSYLERGARKPHKSTVQKVENGLGLPPGTYSRLLVAADPDAELARLIAAQPSNPTAVRRAGAVVVDRHSDTDVLEGYAEAQLDAIKSVIDRLPATTSNEYETYILSVIAQCVKAEMLAASSWRVAVNAGADSTGRLMEHLRALEATRGALLERMPTSLSARFDRACAQSSLPEAVVAALIGVGADEMWDIRNRGVIPAGALPRVRAFVDAIEASHDADEGQQ</sequence>
<name>Y023_MYCBO</name>